<sequence>MSSAVGPRGPRPPTVPPPMQELPDLSHLTEEERNIIMAVMDRQKEEEEKEEAMLKCVVRDMAKPAACKTPRNAENQPHQPSPRLHQQFESYKEQVRKIGEEARRYQGEHKDDAPTCGICHKTKFADGCGHLCSYCRTKFCARCGGRVSLRSNNEDKVVMWVCNLCRKQQEILTKSGAWFFGSGPQQTSQDGTLSDTATGAGSEVPREKKARLQERSRSQTPLSTAAASSQDAAPPSAPPDRSKGAEPSQQALGPEQKQASSRSRSEPPRERKKTPGLSEQNGKGALKSERKRVPKTSAQPVEGAVEERERKERRESRRLEKGRSQDYPDTPEKRDEGKAADEEKQRKEEDYQTRYRSDPNLARYPVKPPPEEQQMRMHARVSRARHERRHSDVALPRTEAGAALPEGKAGKRAPAAARASPPDSPRAYSAERTAETRAPGAKQLTNHSPPAPRHGPVPAEAPELKAQEPLRKQSRLDPSSAVLMRKAKREKVETMLRNDSLSSDQSESVRPSPPKPHRSKRGGKKRQMSVSSSEEEGVSTPEYTSCEDVELESESVSEKGDLDYYWLDPATWHSRETSPISSHPVTWQPSKEGDRLIGRVILNKRTTMPKDSGALLGLKVVGGKMTDLGRLGAFITKVKKGSLADVVGHLRAGDEVLEWNGKPLPGATNEEVYNIILESKSEPQVEIIVSRPIGDIPRIPESSHPPLESSSSSFESQKMERPSISVISPTSPGALKDAPQVLPGQLSVKLWYDKVGHQLIVNVLQATDLPARVDGRPRNPYVKMYFLPDRSDKSKRRTKTVKKILEPKWNQTFVYSHVHRRDFRERMLEITVWDQPRVQEEESEFLGEILIELETALLDDEPHWYKLQTHDESSLPLPQPSPFMPRRHIHGESSSKKLQRSQRISDSDISDYEVDDGIGVVPPVGYRSSARESKSTTLTVPEQQRTTHHRSRSVSPHRGNDQGKPRSRLPNVPLQRSLDEIHPTRRSRSPTRHHDASRSPVDHRTRDVDSQYLSEQDSELLMLPRAKRGRSAECLHTTRHLVRHYKTLPPKMPLLQSSSHWNIYSSILPAHTKTKSVTRQDISLHHECFNSTVLRFTDEILVSELQPFLDRARSASTNCLRPDTSLHSPERERGRWSPSLDRRRPPSPRIQIQHASPENDRHSRKSERSSIQKQTRKGTASDAERVLPTCLSRRGHAAPRATDQPVIRGKHPARSRSSEHSSIRTLCSMHHLVPGGSAPPSPLLTRMHRQRSPTQSPPADTSFSSRRGRQLPQVPVRSGSIEQASLVVEERTRQMKMKVHRFKQTTGSGSSQELDREQYSKYNIHKDQYRSCDNVSAKSSDSDVSDVSAISRTSSASRLSSTSFMSEQSERPRGRISSFTPKMQGRRMGTSGRSIMKSTSVSGEMYTLEHNDGSQSDTAVGTVGAGGKKRRSSLSAKVVAIVSRRSRSTSQLSQTESGHKKLKSTIQRSTETGMAAEMRKMVRQPSRESTDGSINSYSSEGNLIFPGVRLGADSQFSDFLDGLGPAQLVGRQTLATPAMGDIQIGMEDKKGQLEVEVIRARSLTQKPGSKSTPAPYVKVYLLENGACIAKKKTRIARKTLDPLYQQSLVFDESPQGKVLQVIVWGDYGRMDHKCFMGVAQILLEELDLSSMVIGWYKLFPPSSLVDPTLTPLTRRASQSSLESSTGPPCIRS</sequence>
<feature type="chain" id="PRO_0000190198" description="Regulating synaptic membrane exocytosis protein 1">
    <location>
        <begin position="1"/>
        <end position="1692"/>
    </location>
</feature>
<feature type="domain" description="RabBD" evidence="7">
    <location>
        <begin position="22"/>
        <end position="182"/>
    </location>
</feature>
<feature type="domain" description="PDZ" evidence="6">
    <location>
        <begin position="605"/>
        <end position="691"/>
    </location>
</feature>
<feature type="domain" description="C2 1" evidence="4">
    <location>
        <begin position="742"/>
        <end position="865"/>
    </location>
</feature>
<feature type="domain" description="C2 2" evidence="4">
    <location>
        <begin position="1538"/>
        <end position="1656"/>
    </location>
</feature>
<feature type="zinc finger region" description="FYVE-type" evidence="5">
    <location>
        <begin position="110"/>
        <end position="170"/>
    </location>
</feature>
<feature type="region of interest" description="Disordered" evidence="8">
    <location>
        <begin position="1"/>
        <end position="26"/>
    </location>
</feature>
<feature type="region of interest" description="Disordered" evidence="8">
    <location>
        <begin position="183"/>
        <end position="555"/>
    </location>
</feature>
<feature type="region of interest" description="Disordered" evidence="8">
    <location>
        <begin position="698"/>
        <end position="732"/>
    </location>
</feature>
<feature type="region of interest" description="Disordered" evidence="8">
    <location>
        <begin position="870"/>
        <end position="1013"/>
    </location>
</feature>
<feature type="region of interest" description="Disordered" evidence="8">
    <location>
        <begin position="1118"/>
        <end position="1222"/>
    </location>
</feature>
<feature type="region of interest" description="Disordered" evidence="8">
    <location>
        <begin position="1235"/>
        <end position="1278"/>
    </location>
</feature>
<feature type="region of interest" description="Disordered" evidence="8">
    <location>
        <begin position="1332"/>
        <end position="1394"/>
    </location>
</feature>
<feature type="region of interest" description="Disordered" evidence="8">
    <location>
        <begin position="1408"/>
        <end position="1428"/>
    </location>
</feature>
<feature type="region of interest" description="Disordered" evidence="8">
    <location>
        <begin position="1445"/>
        <end position="1495"/>
    </location>
</feature>
<feature type="compositionally biased region" description="Pro residues" evidence="8">
    <location>
        <begin position="9"/>
        <end position="20"/>
    </location>
</feature>
<feature type="compositionally biased region" description="Polar residues" evidence="8">
    <location>
        <begin position="183"/>
        <end position="199"/>
    </location>
</feature>
<feature type="compositionally biased region" description="Basic and acidic residues" evidence="8">
    <location>
        <begin position="204"/>
        <end position="217"/>
    </location>
</feature>
<feature type="compositionally biased region" description="Low complexity" evidence="8">
    <location>
        <begin position="223"/>
        <end position="234"/>
    </location>
</feature>
<feature type="compositionally biased region" description="Basic and acidic residues" evidence="8">
    <location>
        <begin position="305"/>
        <end position="357"/>
    </location>
</feature>
<feature type="compositionally biased region" description="Basic residues" evidence="8">
    <location>
        <begin position="377"/>
        <end position="388"/>
    </location>
</feature>
<feature type="compositionally biased region" description="Low complexity" evidence="8">
    <location>
        <begin position="412"/>
        <end position="430"/>
    </location>
</feature>
<feature type="compositionally biased region" description="Basic and acidic residues" evidence="8">
    <location>
        <begin position="462"/>
        <end position="475"/>
    </location>
</feature>
<feature type="compositionally biased region" description="Polar residues" evidence="8">
    <location>
        <begin position="497"/>
        <end position="509"/>
    </location>
</feature>
<feature type="compositionally biased region" description="Basic residues" evidence="8">
    <location>
        <begin position="515"/>
        <end position="527"/>
    </location>
</feature>
<feature type="compositionally biased region" description="Acidic residues" evidence="8">
    <location>
        <begin position="545"/>
        <end position="555"/>
    </location>
</feature>
<feature type="compositionally biased region" description="Low complexity" evidence="8">
    <location>
        <begin position="700"/>
        <end position="716"/>
    </location>
</feature>
<feature type="compositionally biased region" description="Polar residues" evidence="8">
    <location>
        <begin position="935"/>
        <end position="944"/>
    </location>
</feature>
<feature type="compositionally biased region" description="Basic and acidic residues" evidence="8">
    <location>
        <begin position="992"/>
        <end position="1009"/>
    </location>
</feature>
<feature type="compositionally biased region" description="Basic and acidic residues" evidence="8">
    <location>
        <begin position="1128"/>
        <end position="1144"/>
    </location>
</feature>
<feature type="compositionally biased region" description="Basic and acidic residues" evidence="8">
    <location>
        <begin position="1157"/>
        <end position="1170"/>
    </location>
</feature>
<feature type="compositionally biased region" description="Polar residues" evidence="8">
    <location>
        <begin position="1252"/>
        <end position="1265"/>
    </location>
</feature>
<feature type="compositionally biased region" description="Low complexity" evidence="8">
    <location>
        <begin position="1345"/>
        <end position="1366"/>
    </location>
</feature>
<feature type="compositionally biased region" description="Basic and acidic residues" evidence="8">
    <location>
        <begin position="1477"/>
        <end position="1490"/>
    </location>
</feature>
<feature type="binding site" evidence="5">
    <location>
        <position position="116"/>
    </location>
    <ligand>
        <name>Zn(2+)</name>
        <dbReference type="ChEBI" id="CHEBI:29105"/>
        <label>1</label>
    </ligand>
</feature>
<feature type="binding site" evidence="5">
    <location>
        <position position="119"/>
    </location>
    <ligand>
        <name>Zn(2+)</name>
        <dbReference type="ChEBI" id="CHEBI:29105"/>
        <label>1</label>
    </ligand>
</feature>
<feature type="binding site" evidence="5">
    <location>
        <position position="132"/>
    </location>
    <ligand>
        <name>Zn(2+)</name>
        <dbReference type="ChEBI" id="CHEBI:29105"/>
        <label>2</label>
    </ligand>
</feature>
<feature type="binding site" evidence="5">
    <location>
        <position position="135"/>
    </location>
    <ligand>
        <name>Zn(2+)</name>
        <dbReference type="ChEBI" id="CHEBI:29105"/>
        <label>2</label>
    </ligand>
</feature>
<feature type="binding site" evidence="5">
    <location>
        <position position="140"/>
    </location>
    <ligand>
        <name>Zn(2+)</name>
        <dbReference type="ChEBI" id="CHEBI:29105"/>
        <label>1</label>
    </ligand>
</feature>
<feature type="binding site" evidence="5">
    <location>
        <position position="143"/>
    </location>
    <ligand>
        <name>Zn(2+)</name>
        <dbReference type="ChEBI" id="CHEBI:29105"/>
        <label>1</label>
    </ligand>
</feature>
<feature type="binding site" evidence="5">
    <location>
        <position position="162"/>
    </location>
    <ligand>
        <name>Zn(2+)</name>
        <dbReference type="ChEBI" id="CHEBI:29105"/>
        <label>2</label>
    </ligand>
</feature>
<feature type="binding site" evidence="5">
    <location>
        <position position="165"/>
    </location>
    <ligand>
        <name>Zn(2+)</name>
        <dbReference type="ChEBI" id="CHEBI:29105"/>
        <label>2</label>
    </ligand>
</feature>
<feature type="modified residue" description="Phosphoserine" evidence="3">
    <location>
        <position position="500"/>
    </location>
</feature>
<feature type="modified residue" description="Phosphoserine" evidence="3">
    <location>
        <position position="578"/>
    </location>
</feature>
<feature type="modified residue" description="Phosphoserine" evidence="2">
    <location>
        <position position="728"/>
    </location>
</feature>
<feature type="modified residue" description="Phosphoserine" evidence="2">
    <location>
        <position position="731"/>
    </location>
</feature>
<feature type="modified residue" description="Phosphoserine" evidence="2">
    <location>
        <position position="881"/>
    </location>
</feature>
<feature type="modified residue" description="Phosphoserine" evidence="3">
    <location>
        <position position="977"/>
    </location>
</feature>
<feature type="modified residue" description="Phosphoserine" evidence="2">
    <location>
        <position position="1031"/>
    </location>
</feature>
<feature type="modified residue" description="Phosphoserine" evidence="2">
    <location>
        <position position="1252"/>
    </location>
</feature>
<feature type="modified residue" description="Phosphothreonine" evidence="3">
    <location>
        <position position="1254"/>
    </location>
</feature>
<feature type="modified residue" description="Phosphoserine" evidence="2">
    <location>
        <position position="1256"/>
    </location>
</feature>
<feature type="modified residue" description="Phosphoserine" evidence="3">
    <location>
        <position position="1308"/>
    </location>
</feature>
<feature type="modified residue" description="Phosphoserine" evidence="3">
    <location>
        <position position="1310"/>
    </location>
</feature>
<feature type="modified residue" description="Phosphoserine" evidence="3">
    <location>
        <position position="1311"/>
    </location>
</feature>
<feature type="modified residue" description="Phosphoserine" evidence="2">
    <location>
        <position position="1339"/>
    </location>
</feature>
<feature type="modified residue" description="Phosphoserine" evidence="2">
    <location>
        <position position="1340"/>
    </location>
</feature>
<feature type="modified residue" description="Phosphoserine" evidence="2">
    <location>
        <position position="1342"/>
    </location>
</feature>
<feature type="modified residue" description="Phosphoserine" evidence="3">
    <location>
        <position position="1416"/>
    </location>
</feature>
<feature type="modified residue" description="Phosphoserine" evidence="18">
    <location>
        <position position="1677"/>
    </location>
</feature>
<feature type="modified residue" description="Phosphoserine" evidence="18">
    <location>
        <position position="1680"/>
    </location>
</feature>
<feature type="modified residue" description="Phosphoserine" evidence="18">
    <location>
        <position position="1683"/>
    </location>
</feature>
<feature type="modified residue" description="Phosphoserine" evidence="18">
    <location>
        <position position="1692"/>
    </location>
</feature>
<feature type="splice variant" id="VSP_045485" description="In isoform 11." evidence="13">
    <location>
        <begin position="1"/>
        <end position="1473"/>
    </location>
</feature>
<feature type="splice variant" id="VSP_045486" description="In isoform 10." evidence="13">
    <location>
        <begin position="1"/>
        <end position="607"/>
    </location>
</feature>
<feature type="splice variant" id="VSP_046796" description="In isoform 12 and isoform 13." evidence="13">
    <original>MSSAVGPRGPRPPTVPPPMQELPDLSHLTEEERNIIMAVMDRQKEEEEKEEAMLKCVVRDMAKPAACKTPRNAENQPHQPSPRLHQQFESYKEQVRKIGEEARRYQGEHKDDAPTCGICHKTKFADGCGHLCSYCRTKFCARCGGRVSLRSNNEDKVVMWVCNLCRKQQEILTKSGAWFFGSGPQQTSQDGTLSDTATGAGSEVPREKKARLQERSRSQTPLSTAAASSQDAAPPSAPPDRSKGAEPSQQALGPEQKQASSRSRSEPPRERKKTPGLSEQNGKGALKSERKRVPKTSAQPVEGAVEERERKERRESRRLEKGRSQDYPDTPEKRDEGKAADEEKQRKEEDYQTRYRSDPNLARYPVKPPPEEQQMRMHARVSRARHERRHSDVALPRTEAGAALPEGKAGKRAPAAARASPPDSPRAYSAERTAETRAPGAKQLTNHSPPAPRHGPVPAEAPELKAQEPLRKQSRLDPSSAVLMRKAKREKVETMLRNDSLSSDQSESVRPSPPKPHRSKRGGKKRQMSVSSSEEEGVSTPEYTSCEDVELESESVSEK</original>
    <variation>MCAPGIHVSSEGWEEVRSVDSEEGTIEARRAVA</variation>
    <location>
        <begin position="1"/>
        <end position="559"/>
    </location>
</feature>
<feature type="splice variant" id="VSP_043177" description="In isoform 9." evidence="13">
    <original>MSSAVGPRGPRPPTVPPP</original>
    <variation>MFAGFLQFLLLHTLHSGT</variation>
    <location>
        <begin position="1"/>
        <end position="18"/>
    </location>
</feature>
<feature type="splice variant" id="VSP_043178" description="In isoform 9." evidence="13">
    <location>
        <begin position="19"/>
        <end position="559"/>
    </location>
</feature>
<feature type="splice variant" id="VSP_008161" description="In isoform 5, isoform 7, isoform 8 and isoform 12." evidence="12 13">
    <location>
        <position position="924"/>
    </location>
</feature>
<feature type="splice variant" id="VSP_008162" description="In isoform 8." evidence="12">
    <location>
        <begin position="1018"/>
        <end position="1245"/>
    </location>
</feature>
<feature type="splice variant" id="VSP_008163" description="In isoform 5." evidence="12">
    <location>
        <begin position="1038"/>
        <end position="1244"/>
    </location>
</feature>
<feature type="splice variant" id="VSP_008164" description="In isoform 3, isoform 6, isoform 7, isoform 9, isoform 10, isoform 12 and isoform 13." evidence="12 13 16">
    <location>
        <begin position="1039"/>
        <end position="1102"/>
    </location>
</feature>
<feature type="splice variant" id="VSP_008165" description="In isoform 2." evidence="14 15 16">
    <location>
        <begin position="1040"/>
        <end position="1692"/>
    </location>
</feature>
<feature type="splice variant" id="VSP_008166" description="In isoform 4." evidence="12">
    <location>
        <begin position="1065"/>
        <end position="1102"/>
    </location>
</feature>
<feature type="splice variant" id="VSP_008167" description="In isoform 3, isoform 4, isoform 7 and isoform 13." evidence="12 13 16">
    <location>
        <begin position="1133"/>
        <end position="1245"/>
    </location>
</feature>
<feature type="splice variant" id="VSP_043179" description="In isoform 9, isoform 10 and isoform 12." evidence="13">
    <location>
        <begin position="1133"/>
        <end position="1160"/>
    </location>
</feature>
<feature type="splice variant" id="VSP_008168" description="In isoform 6." evidence="12">
    <location>
        <begin position="1161"/>
        <end position="1245"/>
    </location>
</feature>
<feature type="splice variant" id="VSP_043180" description="In isoform 9, isoform 10 and isoform 12." evidence="13">
    <location>
        <begin position="1185"/>
        <end position="1245"/>
    </location>
</feature>
<feature type="splice variant" id="VSP_008169" description="In isoform 6, isoform 7, isoform 8, isoform 9, isoform 10 and isoform 13." evidence="12 13">
    <location>
        <begin position="1284"/>
        <end position="1455"/>
    </location>
</feature>
<feature type="splice variant" id="VSP_008170" description="In isoform 5." evidence="12">
    <location>
        <begin position="1377"/>
        <end position="1385"/>
    </location>
</feature>
<feature type="splice variant" id="VSP_008171" description="In isoform 3." evidence="12 16">
    <location>
        <begin position="1540"/>
        <end position="1573"/>
    </location>
</feature>
<feature type="sequence variant" id="VAR_016804" description="Found in a family with cone-rod dystrophy; uncertain significance; dbSNP:rs121918302." evidence="10">
    <original>R</original>
    <variation>H</variation>
    <location>
        <position position="820"/>
    </location>
</feature>
<feature type="mutagenesis site" description="Abolishes interaction with SYT1 and CACNA1B." evidence="9">
    <original>RR</original>
    <variation>AA</variation>
    <location>
        <begin position="796"/>
        <end position="797"/>
    </location>
</feature>
<feature type="mutagenesis site" description="Abolishes interaction with SYT1 and CACNA1B." evidence="9">
    <original>KK</original>
    <variation>AA</variation>
    <location>
        <begin position="1591"/>
        <end position="1592"/>
    </location>
</feature>
<feature type="sequence conflict" description="In Ref. 5; CAI16961." evidence="17" ref="5">
    <original>V</original>
    <variation>Y</variation>
    <location>
        <position position="157"/>
    </location>
</feature>
<feature type="sequence conflict" description="In Ref. 2; BAB87121/BAB87242, 3; BAA20798 and 6; AAI51854/AAI52436." evidence="17" ref="2 3 6">
    <location>
        <begin position="484"/>
        <end position="494"/>
    </location>
</feature>
<feature type="sequence conflict" description="In Ref. 4; BAH11945." evidence="17" ref="4">
    <original>P</original>
    <variation>S</variation>
    <location>
        <position position="1272"/>
    </location>
</feature>
<feature type="sequence conflict" description="In Ref. 4; BAH11906." evidence="17" ref="4">
    <original>Q</original>
    <variation>R</variation>
    <location>
        <position position="1606"/>
    </location>
</feature>
<feature type="sequence conflict" description="In Ref. 4; BAH13358." evidence="17" ref="4">
    <original>V</original>
    <variation>A</variation>
    <location>
        <position position="1609"/>
    </location>
</feature>
<feature type="sequence conflict" description="In Ref. 4; AK309185." evidence="17" ref="4">
    <original>S</original>
    <variation>P</variation>
    <location>
        <position position="1662"/>
    </location>
</feature>
<feature type="strand" evidence="19">
    <location>
        <begin position="585"/>
        <end position="589"/>
    </location>
</feature>
<feature type="strand" evidence="19">
    <location>
        <begin position="591"/>
        <end position="602"/>
    </location>
</feature>
<feature type="strand" evidence="19">
    <location>
        <begin position="609"/>
        <end position="611"/>
    </location>
</feature>
<feature type="strand" evidence="19">
    <location>
        <begin position="616"/>
        <end position="625"/>
    </location>
</feature>
<feature type="strand" evidence="19">
    <location>
        <begin position="629"/>
        <end position="638"/>
    </location>
</feature>
<feature type="helix" evidence="19">
    <location>
        <begin position="643"/>
        <end position="646"/>
    </location>
</feature>
<feature type="strand" evidence="19">
    <location>
        <begin position="655"/>
        <end position="661"/>
    </location>
</feature>
<feature type="helix" evidence="19">
    <location>
        <begin position="669"/>
        <end position="678"/>
    </location>
</feature>
<feature type="helix" evidence="19">
    <location>
        <begin position="679"/>
        <end position="681"/>
    </location>
</feature>
<feature type="strand" evidence="19">
    <location>
        <begin position="685"/>
        <end position="691"/>
    </location>
</feature>
<keyword id="KW-0002">3D-structure</keyword>
<keyword id="KW-0025">Alternative splicing</keyword>
<keyword id="KW-1003">Cell membrane</keyword>
<keyword id="KW-0966">Cell projection</keyword>
<keyword id="KW-0182">Cone-rod dystrophy</keyword>
<keyword id="KW-0221">Differentiation</keyword>
<keyword id="KW-0268">Exocytosis</keyword>
<keyword id="KW-0472">Membrane</keyword>
<keyword id="KW-0479">Metal-binding</keyword>
<keyword id="KW-0532">Neurotransmitter transport</keyword>
<keyword id="KW-0597">Phosphoprotein</keyword>
<keyword id="KW-1267">Proteomics identification</keyword>
<keyword id="KW-1185">Reference proteome</keyword>
<keyword id="KW-0677">Repeat</keyword>
<keyword id="KW-0716">Sensory transduction</keyword>
<keyword id="KW-0770">Synapse</keyword>
<keyword id="KW-0813">Transport</keyword>
<keyword id="KW-0844">Vision</keyword>
<keyword id="KW-0862">Zinc</keyword>
<keyword id="KW-0863">Zinc-finger</keyword>
<proteinExistence type="evidence at protein level"/>
<dbReference type="EMBL" id="AY190519">
    <property type="protein sequence ID" value="AAO38848.1"/>
    <property type="molecule type" value="mRNA"/>
</dbReference>
<dbReference type="EMBL" id="AB045726">
    <property type="protein sequence ID" value="BAB87121.1"/>
    <property type="molecule type" value="mRNA"/>
</dbReference>
<dbReference type="EMBL" id="AB051866">
    <property type="protein sequence ID" value="BAB87242.1"/>
    <property type="molecule type" value="mRNA"/>
</dbReference>
<dbReference type="EMBL" id="AB002338">
    <property type="protein sequence ID" value="BAA20798.1"/>
    <property type="status" value="ALT_INIT"/>
    <property type="molecule type" value="mRNA"/>
</dbReference>
<dbReference type="EMBL" id="AK296303">
    <property type="protein sequence ID" value="BAH12309.1"/>
    <property type="molecule type" value="mRNA"/>
</dbReference>
<dbReference type="EMBL" id="AK294868">
    <property type="protein sequence ID" value="BAH11906.1"/>
    <property type="molecule type" value="mRNA"/>
</dbReference>
<dbReference type="EMBL" id="AK295001">
    <property type="protein sequence ID" value="BAH11945.1"/>
    <property type="molecule type" value="mRNA"/>
</dbReference>
<dbReference type="EMBL" id="AK300853">
    <property type="protein sequence ID" value="BAH13358.1"/>
    <property type="molecule type" value="mRNA"/>
</dbReference>
<dbReference type="EMBL" id="AK309185">
    <property type="status" value="NOT_ANNOTATED_CDS"/>
    <property type="molecule type" value="mRNA"/>
</dbReference>
<dbReference type="EMBL" id="AL160405">
    <property type="status" value="NOT_ANNOTATED_CDS"/>
    <property type="molecule type" value="Genomic_DNA"/>
</dbReference>
<dbReference type="EMBL" id="AL590011">
    <property type="protein sequence ID" value="CAI16961.1"/>
    <property type="molecule type" value="Genomic_DNA"/>
</dbReference>
<dbReference type="EMBL" id="AL034373">
    <property type="protein sequence ID" value="CAI16961.1"/>
    <property type="status" value="JOINED"/>
    <property type="molecule type" value="Genomic_DNA"/>
</dbReference>
<dbReference type="EMBL" id="AL390056">
    <property type="protein sequence ID" value="CAI16961.1"/>
    <property type="status" value="JOINED"/>
    <property type="molecule type" value="Genomic_DNA"/>
</dbReference>
<dbReference type="EMBL" id="AL445256">
    <property type="protein sequence ID" value="CAI16961.1"/>
    <property type="status" value="JOINED"/>
    <property type="molecule type" value="Genomic_DNA"/>
</dbReference>
<dbReference type="EMBL" id="AL034373">
    <property type="protein sequence ID" value="CAI20558.1"/>
    <property type="molecule type" value="Genomic_DNA"/>
</dbReference>
<dbReference type="EMBL" id="AL390056">
    <property type="protein sequence ID" value="CAI20558.1"/>
    <property type="status" value="JOINED"/>
    <property type="molecule type" value="Genomic_DNA"/>
</dbReference>
<dbReference type="EMBL" id="AL445256">
    <property type="protein sequence ID" value="CAI20558.1"/>
    <property type="status" value="JOINED"/>
    <property type="molecule type" value="Genomic_DNA"/>
</dbReference>
<dbReference type="EMBL" id="AL590011">
    <property type="protein sequence ID" value="CAI20558.1"/>
    <property type="status" value="JOINED"/>
    <property type="molecule type" value="Genomic_DNA"/>
</dbReference>
<dbReference type="EMBL" id="AL390056">
    <property type="protein sequence ID" value="CAI21554.1"/>
    <property type="molecule type" value="Genomic_DNA"/>
</dbReference>
<dbReference type="EMBL" id="AL034373">
    <property type="protein sequence ID" value="CAI21554.1"/>
    <property type="status" value="JOINED"/>
    <property type="molecule type" value="Genomic_DNA"/>
</dbReference>
<dbReference type="EMBL" id="AL445256">
    <property type="protein sequence ID" value="CAI21554.1"/>
    <property type="status" value="JOINED"/>
    <property type="molecule type" value="Genomic_DNA"/>
</dbReference>
<dbReference type="EMBL" id="AL590011">
    <property type="protein sequence ID" value="CAI21554.1"/>
    <property type="status" value="JOINED"/>
    <property type="molecule type" value="Genomic_DNA"/>
</dbReference>
<dbReference type="EMBL" id="AL445256">
    <property type="protein sequence ID" value="CAI39598.1"/>
    <property type="molecule type" value="Genomic_DNA"/>
</dbReference>
<dbReference type="EMBL" id="AL034373">
    <property type="protein sequence ID" value="CAI39598.1"/>
    <property type="status" value="JOINED"/>
    <property type="molecule type" value="Genomic_DNA"/>
</dbReference>
<dbReference type="EMBL" id="AL390056">
    <property type="protein sequence ID" value="CAI39598.1"/>
    <property type="status" value="JOINED"/>
    <property type="molecule type" value="Genomic_DNA"/>
</dbReference>
<dbReference type="EMBL" id="AL590011">
    <property type="protein sequence ID" value="CAI39598.1"/>
    <property type="status" value="JOINED"/>
    <property type="molecule type" value="Genomic_DNA"/>
</dbReference>
<dbReference type="EMBL" id="AL445256">
    <property type="protein sequence ID" value="CAI39600.1"/>
    <property type="status" value="ALT_SEQ"/>
    <property type="molecule type" value="Genomic_DNA"/>
</dbReference>
<dbReference type="EMBL" id="AL035633">
    <property type="protein sequence ID" value="CAI39600.1"/>
    <property type="status" value="JOINED"/>
    <property type="molecule type" value="Genomic_DNA"/>
</dbReference>
<dbReference type="EMBL" id="AL445256">
    <property type="protein sequence ID" value="CAI39604.1"/>
    <property type="molecule type" value="Genomic_DNA"/>
</dbReference>
<dbReference type="EMBL" id="AL035633">
    <property type="protein sequence ID" value="CAI39604.1"/>
    <property type="status" value="JOINED"/>
    <property type="molecule type" value="Genomic_DNA"/>
</dbReference>
<dbReference type="EMBL" id="AL035633">
    <property type="protein sequence ID" value="CAI42135.1"/>
    <property type="status" value="ALT_SEQ"/>
    <property type="molecule type" value="Genomic_DNA"/>
</dbReference>
<dbReference type="EMBL" id="AL445256">
    <property type="protein sequence ID" value="CAI42135.1"/>
    <property type="status" value="JOINED"/>
    <property type="molecule type" value="Genomic_DNA"/>
</dbReference>
<dbReference type="EMBL" id="AL035633">
    <property type="protein sequence ID" value="CAI42139.1"/>
    <property type="molecule type" value="Genomic_DNA"/>
</dbReference>
<dbReference type="EMBL" id="AL445256">
    <property type="protein sequence ID" value="CAI42139.1"/>
    <property type="status" value="JOINED"/>
    <property type="molecule type" value="Genomic_DNA"/>
</dbReference>
<dbReference type="EMBL" id="BC151853">
    <property type="protein sequence ID" value="AAI51854.1"/>
    <property type="molecule type" value="mRNA"/>
</dbReference>
<dbReference type="EMBL" id="BC152435">
    <property type="protein sequence ID" value="AAI52436.1"/>
    <property type="molecule type" value="mRNA"/>
</dbReference>
<dbReference type="EMBL" id="AF263305">
    <property type="protein sequence ID" value="AAG23162.1"/>
    <property type="molecule type" value="mRNA"/>
</dbReference>
<dbReference type="EMBL" id="AF263306">
    <property type="protein sequence ID" value="AAG23163.1"/>
    <property type="molecule type" value="mRNA"/>
</dbReference>
<dbReference type="EMBL" id="AF263307">
    <property type="protein sequence ID" value="AAG23164.1"/>
    <property type="molecule type" value="mRNA"/>
</dbReference>
<dbReference type="EMBL" id="AF263308">
    <property type="protein sequence ID" value="AAG23165.1"/>
    <property type="molecule type" value="mRNA"/>
</dbReference>
<dbReference type="EMBL" id="AF263309">
    <property type="protein sequence ID" value="AAG23166.1"/>
    <property type="molecule type" value="mRNA"/>
</dbReference>
<dbReference type="EMBL" id="AF263310">
    <property type="protein sequence ID" value="AAG23167.1"/>
    <property type="molecule type" value="mRNA"/>
</dbReference>
<dbReference type="CCDS" id="CCDS47449.1">
    <molecule id="Q86UR5-1"/>
</dbReference>
<dbReference type="CCDS" id="CCDS55029.1">
    <molecule id="Q86UR5-13"/>
</dbReference>
<dbReference type="CCDS" id="CCDS55030.1">
    <molecule id="Q86UR5-12"/>
</dbReference>
<dbReference type="CCDS" id="CCDS55031.1">
    <molecule id="Q86UR5-9"/>
</dbReference>
<dbReference type="CCDS" id="CCDS55032.1">
    <molecule id="Q86UR5-10"/>
</dbReference>
<dbReference type="CCDS" id="CCDS55033.1">
    <molecule id="Q86UR5-11"/>
</dbReference>
<dbReference type="RefSeq" id="NP_001161879.1">
    <molecule id="Q86UR5-12"/>
    <property type="nucleotide sequence ID" value="NM_001168407.2"/>
</dbReference>
<dbReference type="RefSeq" id="NP_001161880.1">
    <molecule id="Q86UR5-13"/>
    <property type="nucleotide sequence ID" value="NM_001168408.2"/>
</dbReference>
<dbReference type="RefSeq" id="NP_001161881.1">
    <molecule id="Q86UR5-10"/>
    <property type="nucleotide sequence ID" value="NM_001168409.2"/>
</dbReference>
<dbReference type="RefSeq" id="NP_001161882.1">
    <molecule id="Q86UR5-9"/>
    <property type="nucleotide sequence ID" value="NM_001168410.2"/>
</dbReference>
<dbReference type="RefSeq" id="NP_001161883.1">
    <molecule id="Q86UR5-11"/>
    <property type="nucleotide sequence ID" value="NM_001168411.2"/>
</dbReference>
<dbReference type="RefSeq" id="NP_055804.2">
    <molecule id="Q86UR5-1"/>
    <property type="nucleotide sequence ID" value="NM_014989.5"/>
</dbReference>
<dbReference type="RefSeq" id="XP_011533917.2">
    <property type="nucleotide sequence ID" value="XM_011535615.2"/>
</dbReference>
<dbReference type="PDB" id="2CSS">
    <property type="method" value="NMR"/>
    <property type="chains" value="A=585-692"/>
</dbReference>
<dbReference type="PDBsum" id="2CSS"/>
<dbReference type="SMR" id="Q86UR5"/>
<dbReference type="BioGRID" id="116646">
    <property type="interactions" value="27"/>
</dbReference>
<dbReference type="FunCoup" id="Q86UR5">
    <property type="interactions" value="1090"/>
</dbReference>
<dbReference type="IntAct" id="Q86UR5">
    <property type="interactions" value="245"/>
</dbReference>
<dbReference type="STRING" id="9606.ENSP00000428417"/>
<dbReference type="GlyCosmos" id="Q86UR5">
    <property type="glycosylation" value="1 site, 1 glycan"/>
</dbReference>
<dbReference type="GlyGen" id="Q86UR5">
    <property type="glycosylation" value="5 sites, 1 O-linked glycan (4 sites)"/>
</dbReference>
<dbReference type="iPTMnet" id="Q86UR5"/>
<dbReference type="PhosphoSitePlus" id="Q86UR5"/>
<dbReference type="BioMuta" id="RIMS1"/>
<dbReference type="DMDM" id="34395763"/>
<dbReference type="jPOST" id="Q86UR5"/>
<dbReference type="MassIVE" id="Q86UR5"/>
<dbReference type="PaxDb" id="9606-ENSP00000428417"/>
<dbReference type="PeptideAtlas" id="Q86UR5"/>
<dbReference type="ProteomicsDB" id="19415"/>
<dbReference type="ProteomicsDB" id="19549"/>
<dbReference type="ProteomicsDB" id="20026"/>
<dbReference type="ProteomicsDB" id="20521"/>
<dbReference type="ProteomicsDB" id="69870">
    <molecule id="Q86UR5-1"/>
</dbReference>
<dbReference type="ProteomicsDB" id="69871">
    <molecule id="Q86UR5-2"/>
</dbReference>
<dbReference type="ProteomicsDB" id="69872">
    <molecule id="Q86UR5-3"/>
</dbReference>
<dbReference type="ProteomicsDB" id="69873">
    <molecule id="Q86UR5-4"/>
</dbReference>
<dbReference type="ProteomicsDB" id="69874">
    <molecule id="Q86UR5-5"/>
</dbReference>
<dbReference type="ProteomicsDB" id="69875">
    <molecule id="Q86UR5-6"/>
</dbReference>
<dbReference type="ProteomicsDB" id="69876">
    <molecule id="Q86UR5-7"/>
</dbReference>
<dbReference type="ProteomicsDB" id="69877">
    <molecule id="Q86UR5-8"/>
</dbReference>
<dbReference type="ProteomicsDB" id="69878">
    <molecule id="Q86UR5-9"/>
</dbReference>
<dbReference type="Antibodypedia" id="49157">
    <property type="antibodies" value="25 antibodies from 12 providers"/>
</dbReference>
<dbReference type="DNASU" id="22999"/>
<dbReference type="Ensembl" id="ENST00000264839.11">
    <molecule id="Q86UR5-4"/>
    <property type="protein sequence ID" value="ENSP00000264839.7"/>
    <property type="gene ID" value="ENSG00000079841.20"/>
</dbReference>
<dbReference type="Ensembl" id="ENST00000401910.7">
    <molecule id="Q86UR5-12"/>
    <property type="protein sequence ID" value="ENSP00000385649.3"/>
    <property type="gene ID" value="ENSG00000079841.20"/>
</dbReference>
<dbReference type="Ensembl" id="ENST00000414192.2">
    <molecule id="Q86UR5-11"/>
    <property type="protein sequence ID" value="ENSP00000402273.2"/>
    <property type="gene ID" value="ENSG00000079841.20"/>
</dbReference>
<dbReference type="Ensembl" id="ENST00000425662.6">
    <molecule id="Q86UR5-10"/>
    <property type="protein sequence ID" value="ENSP00000411235.2"/>
    <property type="gene ID" value="ENSG00000079841.20"/>
</dbReference>
<dbReference type="Ensembl" id="ENST00000491071.6">
    <molecule id="Q86UR5-3"/>
    <property type="protein sequence ID" value="ENSP00000430101.1"/>
    <property type="gene ID" value="ENSG00000079841.20"/>
</dbReference>
<dbReference type="Ensembl" id="ENST00000517827.5">
    <molecule id="Q86UR5-9"/>
    <property type="protein sequence ID" value="ENSP00000428367.1"/>
    <property type="gene ID" value="ENSG00000079841.20"/>
</dbReference>
<dbReference type="Ensembl" id="ENST00000517960.5">
    <molecule id="Q86UR5-5"/>
    <property type="protein sequence ID" value="ENSP00000429959.1"/>
    <property type="gene ID" value="ENSG00000079841.20"/>
</dbReference>
<dbReference type="Ensembl" id="ENST00000518273.5">
    <molecule id="Q86UR5-6"/>
    <property type="protein sequence ID" value="ENSP00000430408.1"/>
    <property type="gene ID" value="ENSG00000079841.20"/>
</dbReference>
<dbReference type="Ensembl" id="ENST00000520567.5">
    <molecule id="Q86UR5-7"/>
    <property type="protein sequence ID" value="ENSP00000430502.1"/>
    <property type="gene ID" value="ENSG00000079841.20"/>
</dbReference>
<dbReference type="Ensembl" id="ENST00000521978.6">
    <molecule id="Q86UR5-1"/>
    <property type="protein sequence ID" value="ENSP00000428417.1"/>
    <property type="gene ID" value="ENSG00000079841.20"/>
</dbReference>
<dbReference type="Ensembl" id="ENST00000522291.5">
    <molecule id="Q86UR5-8"/>
    <property type="protein sequence ID" value="ENSP00000430932.1"/>
    <property type="gene ID" value="ENSG00000079841.20"/>
</dbReference>
<dbReference type="Ensembl" id="ENST00000523963.5">
    <molecule id="Q86UR5-13"/>
    <property type="protein sequence ID" value="ENSP00000428328.1"/>
    <property type="gene ID" value="ENSG00000079841.20"/>
</dbReference>
<dbReference type="GeneID" id="22999"/>
<dbReference type="KEGG" id="hsa:22999"/>
<dbReference type="MANE-Select" id="ENST00000521978.6">
    <property type="protein sequence ID" value="ENSP00000428417.1"/>
    <property type="RefSeq nucleotide sequence ID" value="NM_014989.7"/>
    <property type="RefSeq protein sequence ID" value="NP_055804.2"/>
</dbReference>
<dbReference type="UCSC" id="uc003pga.5">
    <molecule id="Q86UR5-1"/>
    <property type="organism name" value="human"/>
</dbReference>
<dbReference type="AGR" id="HGNC:17282"/>
<dbReference type="CTD" id="22999"/>
<dbReference type="DisGeNET" id="22999"/>
<dbReference type="GeneCards" id="RIMS1"/>
<dbReference type="HGNC" id="HGNC:17282">
    <property type="gene designation" value="RIMS1"/>
</dbReference>
<dbReference type="HPA" id="ENSG00000079841">
    <property type="expression patterns" value="Tissue enriched (brain)"/>
</dbReference>
<dbReference type="MalaCards" id="RIMS1"/>
<dbReference type="MIM" id="603649">
    <property type="type" value="phenotype"/>
</dbReference>
<dbReference type="MIM" id="606629">
    <property type="type" value="gene"/>
</dbReference>
<dbReference type="neXtProt" id="NX_Q86UR5"/>
<dbReference type="OpenTargets" id="ENSG00000079841"/>
<dbReference type="Orphanet" id="1872">
    <property type="disease" value="Cone rod dystrophy"/>
</dbReference>
<dbReference type="PharmGKB" id="PA38220"/>
<dbReference type="VEuPathDB" id="HostDB:ENSG00000079841"/>
<dbReference type="eggNOG" id="KOG2060">
    <property type="taxonomic scope" value="Eukaryota"/>
</dbReference>
<dbReference type="GeneTree" id="ENSGT00940000155134"/>
<dbReference type="HOGENOM" id="CLU_001061_1_0_1"/>
<dbReference type="InParanoid" id="Q86UR5"/>
<dbReference type="OMA" id="FPLHHEC"/>
<dbReference type="OrthoDB" id="420032at2759"/>
<dbReference type="PAN-GO" id="Q86UR5">
    <property type="GO annotations" value="7 GO annotations based on evolutionary models"/>
</dbReference>
<dbReference type="PhylomeDB" id="Q86UR5"/>
<dbReference type="TreeFam" id="TF321703"/>
<dbReference type="PathwayCommons" id="Q86UR5"/>
<dbReference type="Reactome" id="R-HSA-181429">
    <property type="pathway name" value="Serotonin Neurotransmitter Release Cycle"/>
</dbReference>
<dbReference type="Reactome" id="R-HSA-181430">
    <property type="pathway name" value="Norepinephrine Neurotransmitter Release Cycle"/>
</dbReference>
<dbReference type="Reactome" id="R-HSA-210500">
    <property type="pathway name" value="Glutamate Neurotransmitter Release Cycle"/>
</dbReference>
<dbReference type="Reactome" id="R-HSA-212676">
    <property type="pathway name" value="Dopamine Neurotransmitter Release Cycle"/>
</dbReference>
<dbReference type="Reactome" id="R-HSA-264642">
    <property type="pathway name" value="Acetylcholine Neurotransmitter Release Cycle"/>
</dbReference>
<dbReference type="Reactome" id="R-HSA-888590">
    <property type="pathway name" value="GABA synthesis, release, reuptake and degradation"/>
</dbReference>
<dbReference type="SignaLink" id="Q86UR5"/>
<dbReference type="SIGNOR" id="Q86UR5"/>
<dbReference type="BioGRID-ORCS" id="22999">
    <property type="hits" value="13 hits in 1154 CRISPR screens"/>
</dbReference>
<dbReference type="CD-CODE" id="FB4E32DD">
    <property type="entry name" value="Presynaptic clusters and postsynaptic densities"/>
</dbReference>
<dbReference type="ChiTaRS" id="RIMS1">
    <property type="organism name" value="human"/>
</dbReference>
<dbReference type="EvolutionaryTrace" id="Q86UR5"/>
<dbReference type="GeneWiki" id="RIMS1"/>
<dbReference type="GenomeRNAi" id="22999"/>
<dbReference type="Pharos" id="Q86UR5">
    <property type="development level" value="Tbio"/>
</dbReference>
<dbReference type="PRO" id="PR:Q86UR5"/>
<dbReference type="Proteomes" id="UP000005640">
    <property type="component" value="Chromosome 6"/>
</dbReference>
<dbReference type="RNAct" id="Q86UR5">
    <property type="molecule type" value="protein"/>
</dbReference>
<dbReference type="Bgee" id="ENSG00000079841">
    <property type="expression patterns" value="Expressed in cerebellar cortex and 139 other cell types or tissues"/>
</dbReference>
<dbReference type="ExpressionAtlas" id="Q86UR5">
    <property type="expression patterns" value="baseline and differential"/>
</dbReference>
<dbReference type="GO" id="GO:0042995">
    <property type="term" value="C:cell projection"/>
    <property type="evidence" value="ECO:0007669"/>
    <property type="project" value="UniProtKB-KW"/>
</dbReference>
<dbReference type="GO" id="GO:0005829">
    <property type="term" value="C:cytosol"/>
    <property type="evidence" value="ECO:0000304"/>
    <property type="project" value="Reactome"/>
</dbReference>
<dbReference type="GO" id="GO:0005886">
    <property type="term" value="C:plasma membrane"/>
    <property type="evidence" value="ECO:0000250"/>
    <property type="project" value="ParkinsonsUK-UCL"/>
</dbReference>
<dbReference type="GO" id="GO:0048786">
    <property type="term" value="C:presynaptic active zone"/>
    <property type="evidence" value="ECO:0000304"/>
    <property type="project" value="ParkinsonsUK-UCL"/>
</dbReference>
<dbReference type="GO" id="GO:0098831">
    <property type="term" value="C:presynaptic active zone cytoplasmic component"/>
    <property type="evidence" value="ECO:0000318"/>
    <property type="project" value="GO_Central"/>
</dbReference>
<dbReference type="GO" id="GO:0042734">
    <property type="term" value="C:presynaptic membrane"/>
    <property type="evidence" value="ECO:0000250"/>
    <property type="project" value="UniProtKB"/>
</dbReference>
<dbReference type="GO" id="GO:0030695">
    <property type="term" value="F:GTPase regulator activity"/>
    <property type="evidence" value="ECO:0000304"/>
    <property type="project" value="UniProtKB"/>
</dbReference>
<dbReference type="GO" id="GO:0003723">
    <property type="term" value="F:RNA binding"/>
    <property type="evidence" value="ECO:0007005"/>
    <property type="project" value="UniProtKB"/>
</dbReference>
<dbReference type="GO" id="GO:0031267">
    <property type="term" value="F:small GTPase binding"/>
    <property type="evidence" value="ECO:0000250"/>
    <property type="project" value="ParkinsonsUK-UCL"/>
</dbReference>
<dbReference type="GO" id="GO:0098882">
    <property type="term" value="F:structural constituent of presynaptic active zone"/>
    <property type="evidence" value="ECO:0000318"/>
    <property type="project" value="GO_Central"/>
</dbReference>
<dbReference type="GO" id="GO:0008270">
    <property type="term" value="F:zinc ion binding"/>
    <property type="evidence" value="ECO:0007669"/>
    <property type="project" value="UniProtKB-KW"/>
</dbReference>
<dbReference type="GO" id="GO:0060478">
    <property type="term" value="P:acrosomal vesicle exocytosis"/>
    <property type="evidence" value="ECO:0000314"/>
    <property type="project" value="UniProtKB"/>
</dbReference>
<dbReference type="GO" id="GO:0017156">
    <property type="term" value="P:calcium-ion regulated exocytosis"/>
    <property type="evidence" value="ECO:0000304"/>
    <property type="project" value="UniProtKB"/>
</dbReference>
<dbReference type="GO" id="GO:0030154">
    <property type="term" value="P:cell differentiation"/>
    <property type="evidence" value="ECO:0007669"/>
    <property type="project" value="UniProtKB-KW"/>
</dbReference>
<dbReference type="GO" id="GO:0006886">
    <property type="term" value="P:intracellular protein transport"/>
    <property type="evidence" value="ECO:0007669"/>
    <property type="project" value="InterPro"/>
</dbReference>
<dbReference type="GO" id="GO:0061025">
    <property type="term" value="P:membrane fusion"/>
    <property type="evidence" value="ECO:0000303"/>
    <property type="project" value="UniProtKB"/>
</dbReference>
<dbReference type="GO" id="GO:1903861">
    <property type="term" value="P:positive regulation of dendrite extension"/>
    <property type="evidence" value="ECO:0000314"/>
    <property type="project" value="UniProtKB"/>
</dbReference>
<dbReference type="GO" id="GO:2000463">
    <property type="term" value="P:positive regulation of excitatory postsynaptic potential"/>
    <property type="evidence" value="ECO:0000250"/>
    <property type="project" value="ParkinsonsUK-UCL"/>
</dbReference>
<dbReference type="GO" id="GO:0010628">
    <property type="term" value="P:positive regulation of gene expression"/>
    <property type="evidence" value="ECO:0000250"/>
    <property type="project" value="ParkinsonsUK-UCL"/>
</dbReference>
<dbReference type="GO" id="GO:0097151">
    <property type="term" value="P:positive regulation of inhibitory postsynaptic potential"/>
    <property type="evidence" value="ECO:0000250"/>
    <property type="project" value="ParkinsonsUK-UCL"/>
</dbReference>
<dbReference type="GO" id="GO:0065003">
    <property type="term" value="P:protein-containing complex assembly"/>
    <property type="evidence" value="ECO:0000314"/>
    <property type="project" value="UniProtKB"/>
</dbReference>
<dbReference type="GO" id="GO:0045055">
    <property type="term" value="P:regulated exocytosis"/>
    <property type="evidence" value="ECO:0000303"/>
    <property type="project" value="UniProtKB"/>
</dbReference>
<dbReference type="GO" id="GO:0046928">
    <property type="term" value="P:regulation of neurotransmitter secretion"/>
    <property type="evidence" value="ECO:0000304"/>
    <property type="project" value="ParkinsonsUK-UCL"/>
</dbReference>
<dbReference type="GO" id="GO:2000300">
    <property type="term" value="P:regulation of synaptic vesicle exocytosis"/>
    <property type="evidence" value="ECO:0000318"/>
    <property type="project" value="GO_Central"/>
</dbReference>
<dbReference type="GO" id="GO:0046903">
    <property type="term" value="P:secretion"/>
    <property type="evidence" value="ECO:0000303"/>
    <property type="project" value="UniProtKB"/>
</dbReference>
<dbReference type="GO" id="GO:0016081">
    <property type="term" value="P:synaptic vesicle docking"/>
    <property type="evidence" value="ECO:0000318"/>
    <property type="project" value="GO_Central"/>
</dbReference>
<dbReference type="GO" id="GO:0016079">
    <property type="term" value="P:synaptic vesicle exocytosis"/>
    <property type="evidence" value="ECO:0000304"/>
    <property type="project" value="UniProtKB"/>
</dbReference>
<dbReference type="GO" id="GO:0016082">
    <property type="term" value="P:synaptic vesicle priming"/>
    <property type="evidence" value="ECO:0000318"/>
    <property type="project" value="GO_Central"/>
</dbReference>
<dbReference type="GO" id="GO:0007601">
    <property type="term" value="P:visual perception"/>
    <property type="evidence" value="ECO:0007669"/>
    <property type="project" value="UniProtKB-KW"/>
</dbReference>
<dbReference type="CDD" id="cd04031">
    <property type="entry name" value="C2A_RIM1alpha"/>
    <property type="match status" value="1"/>
</dbReference>
<dbReference type="CDD" id="cd04028">
    <property type="entry name" value="C2B_RIM1alpha"/>
    <property type="match status" value="1"/>
</dbReference>
<dbReference type="CDD" id="cd06714">
    <property type="entry name" value="PDZ_RIM-like"/>
    <property type="match status" value="1"/>
</dbReference>
<dbReference type="FunFam" id="3.30.40.10:FF:000546">
    <property type="entry name" value="Regulating synaptic membrane exocytosis 1"/>
    <property type="match status" value="1"/>
</dbReference>
<dbReference type="FunFam" id="2.60.40.150:FF:000001">
    <property type="entry name" value="Regulating synaptic membrane exocytosis 3, isoform CRA_a"/>
    <property type="match status" value="1"/>
</dbReference>
<dbReference type="FunFam" id="2.30.42.10:FF:000003">
    <property type="entry name" value="Regulating synaptic membrane exocytosis protein 1, putative"/>
    <property type="match status" value="1"/>
</dbReference>
<dbReference type="FunFam" id="2.60.40.150:FF:000003">
    <property type="entry name" value="Regulating synaptic membrane exocytosis protein 2"/>
    <property type="match status" value="1"/>
</dbReference>
<dbReference type="Gene3D" id="2.30.42.10">
    <property type="match status" value="1"/>
</dbReference>
<dbReference type="Gene3D" id="2.60.40.150">
    <property type="entry name" value="C2 domain"/>
    <property type="match status" value="2"/>
</dbReference>
<dbReference type="Gene3D" id="3.30.40.10">
    <property type="entry name" value="Zinc/RING finger domain, C3HC4 (zinc finger)"/>
    <property type="match status" value="1"/>
</dbReference>
<dbReference type="InterPro" id="IPR000008">
    <property type="entry name" value="C2_dom"/>
</dbReference>
<dbReference type="InterPro" id="IPR035892">
    <property type="entry name" value="C2_domain_sf"/>
</dbReference>
<dbReference type="InterPro" id="IPR001478">
    <property type="entry name" value="PDZ"/>
</dbReference>
<dbReference type="InterPro" id="IPR036034">
    <property type="entry name" value="PDZ_sf"/>
</dbReference>
<dbReference type="InterPro" id="IPR010911">
    <property type="entry name" value="Rab_BD"/>
</dbReference>
<dbReference type="InterPro" id="IPR039032">
    <property type="entry name" value="Rim-like"/>
</dbReference>
<dbReference type="InterPro" id="IPR054386">
    <property type="entry name" value="RIM_Znf"/>
</dbReference>
<dbReference type="InterPro" id="IPR017455">
    <property type="entry name" value="Znf_FYVE-rel"/>
</dbReference>
<dbReference type="InterPro" id="IPR011011">
    <property type="entry name" value="Znf_FYVE_PHD"/>
</dbReference>
<dbReference type="InterPro" id="IPR013083">
    <property type="entry name" value="Znf_RING/FYVE/PHD"/>
</dbReference>
<dbReference type="PANTHER" id="PTHR12157">
    <property type="entry name" value="REGULATING SYNAPTIC MEMBRANE EXOCYTOSIS PROTEIN"/>
    <property type="match status" value="1"/>
</dbReference>
<dbReference type="PANTHER" id="PTHR12157:SF18">
    <property type="entry name" value="REGULATING SYNAPTIC MEMBRANE EXOCYTOSIS PROTEIN 1"/>
    <property type="match status" value="1"/>
</dbReference>
<dbReference type="Pfam" id="PF00168">
    <property type="entry name" value="C2"/>
    <property type="match status" value="2"/>
</dbReference>
<dbReference type="Pfam" id="PF00595">
    <property type="entry name" value="PDZ"/>
    <property type="match status" value="1"/>
</dbReference>
<dbReference type="Pfam" id="PF22601">
    <property type="entry name" value="RIM2a_ZnF"/>
    <property type="match status" value="1"/>
</dbReference>
<dbReference type="SMART" id="SM00239">
    <property type="entry name" value="C2"/>
    <property type="match status" value="2"/>
</dbReference>
<dbReference type="SMART" id="SM00228">
    <property type="entry name" value="PDZ"/>
    <property type="match status" value="1"/>
</dbReference>
<dbReference type="SUPFAM" id="SSF49562">
    <property type="entry name" value="C2 domain (Calcium/lipid-binding domain, CaLB)"/>
    <property type="match status" value="2"/>
</dbReference>
<dbReference type="SUPFAM" id="SSF57903">
    <property type="entry name" value="FYVE/PHD zinc finger"/>
    <property type="match status" value="1"/>
</dbReference>
<dbReference type="SUPFAM" id="SSF50156">
    <property type="entry name" value="PDZ domain-like"/>
    <property type="match status" value="1"/>
</dbReference>
<dbReference type="PROSITE" id="PS50004">
    <property type="entry name" value="C2"/>
    <property type="match status" value="2"/>
</dbReference>
<dbReference type="PROSITE" id="PS50106">
    <property type="entry name" value="PDZ"/>
    <property type="match status" value="1"/>
</dbReference>
<dbReference type="PROSITE" id="PS50916">
    <property type="entry name" value="RABBD"/>
    <property type="match status" value="1"/>
</dbReference>
<dbReference type="PROSITE" id="PS50178">
    <property type="entry name" value="ZF_FYVE"/>
    <property type="match status" value="1"/>
</dbReference>
<evidence type="ECO:0000250" key="1"/>
<evidence type="ECO:0000250" key="2">
    <source>
        <dbReference type="UniProtKB" id="Q99NE5"/>
    </source>
</evidence>
<evidence type="ECO:0000250" key="3">
    <source>
        <dbReference type="UniProtKB" id="Q9JIR4"/>
    </source>
</evidence>
<evidence type="ECO:0000255" key="4">
    <source>
        <dbReference type="PROSITE-ProRule" id="PRU00041"/>
    </source>
</evidence>
<evidence type="ECO:0000255" key="5">
    <source>
        <dbReference type="PROSITE-ProRule" id="PRU00091"/>
    </source>
</evidence>
<evidence type="ECO:0000255" key="6">
    <source>
        <dbReference type="PROSITE-ProRule" id="PRU00143"/>
    </source>
</evidence>
<evidence type="ECO:0000255" key="7">
    <source>
        <dbReference type="PROSITE-ProRule" id="PRU00234"/>
    </source>
</evidence>
<evidence type="ECO:0000256" key="8">
    <source>
        <dbReference type="SAM" id="MobiDB-lite"/>
    </source>
</evidence>
<evidence type="ECO:0000269" key="9">
    <source>
    </source>
</evidence>
<evidence type="ECO:0000269" key="10">
    <source>
    </source>
</evidence>
<evidence type="ECO:0000269" key="11">
    <source>
    </source>
</evidence>
<evidence type="ECO:0000303" key="12">
    <source>
    </source>
</evidence>
<evidence type="ECO:0000303" key="13">
    <source>
    </source>
</evidence>
<evidence type="ECO:0000303" key="14">
    <source>
    </source>
</evidence>
<evidence type="ECO:0000303" key="15">
    <source>
    </source>
</evidence>
<evidence type="ECO:0000303" key="16">
    <source ref="2"/>
</evidence>
<evidence type="ECO:0000305" key="17"/>
<evidence type="ECO:0007744" key="18">
    <source>
    </source>
</evidence>
<evidence type="ECO:0007829" key="19">
    <source>
        <dbReference type="PDB" id="2CSS"/>
    </source>
</evidence>
<gene>
    <name type="primary">RIMS1</name>
    <name type="synonym">KIAA0340</name>
    <name type="synonym">RAB3IP2</name>
    <name type="synonym">RIM1</name>
    <name type="ORF">Nbla00761</name>
</gene>
<comment type="function">
    <text evidence="2 11">Rab effector involved in exocytosis (By similarity). May act as scaffold protein that regulates neurotransmitter release at the active zone. Essential for maintaining normal probability of neurotransmitter release and for regulating release during short-term synaptic plasticity (By similarity). Plays a role in dendrite formation by melanocytes (PubMed:23999003).</text>
</comment>
<comment type="subunit">
    <text evidence="1 9">Binds RAB3A, RAB3B and RAB3D that have been activated by GTP-binding. Interacts with RAB3C, RAB10, RAB26 and RAB37. Binds UNC13A. Interacts with TSPOAP1 and RIMBP2. Interacts with PPFIA3 and PPFIA4. Interacts with ERC1 (By similarity). Binds SNAP25, SYT1 and CACNA1B. Interaction with SYT1 is enhanced by calcium ions. Interaction with SNAP25 is weaker in the presence of calcium ions.</text>
</comment>
<comment type="interaction">
    <interactant intactId="EBI-1043236">
        <id>Q86UR5</id>
    </interactant>
    <interactant intactId="EBI-375543">
        <id>P00519</id>
        <label>ABL1</label>
    </interactant>
    <organismsDiffer>false</organismsDiffer>
    <experiments>2</experiments>
</comment>
<comment type="interaction">
    <interactant intactId="EBI-1043236">
        <id>Q86UR5</id>
    </interactant>
    <interactant intactId="EBI-713291">
        <id>P51114</id>
        <label>FXR1</label>
    </interactant>
    <organismsDiffer>false</organismsDiffer>
    <experiments>2</experiments>
</comment>
<comment type="interaction">
    <interactant intactId="EBI-1043236">
        <id>Q86UR5</id>
    </interactant>
    <interactant intactId="EBI-515315">
        <id>P06241</id>
        <label>FYN</label>
    </interactant>
    <organismsDiffer>false</organismsDiffer>
    <experiments>2</experiments>
</comment>
<comment type="interaction">
    <interactant intactId="EBI-1043236">
        <id>Q86UR5</id>
    </interactant>
    <interactant intactId="EBI-715469">
        <id>O75899</id>
        <label>GABBR2</label>
    </interactant>
    <organismsDiffer>false</organismsDiffer>
    <experiments>2</experiments>
</comment>
<comment type="interaction">
    <interactant intactId="EBI-1043236">
        <id>Q86UR5</id>
    </interactant>
    <interactant intactId="EBI-707595">
        <id>P27448</id>
        <label>MARK3</label>
    </interactant>
    <organismsDiffer>false</organismsDiffer>
    <experiments>3</experiments>
</comment>
<comment type="interaction">
    <interactant intactId="EBI-1043236">
        <id>Q86UR5</id>
    </interactant>
    <interactant intactId="EBI-714796">
        <id>Q9UKM9</id>
        <label>RALY</label>
    </interactant>
    <organismsDiffer>false</organismsDiffer>
    <experiments>2</experiments>
</comment>
<comment type="interaction">
    <interactant intactId="EBI-1043236">
        <id>Q86UR5</id>
    </interactant>
    <interactant intactId="EBI-593303">
        <id>P78362</id>
        <label>SRPK2</label>
    </interactant>
    <organismsDiffer>false</organismsDiffer>
    <experiments>3</experiments>
</comment>
<comment type="subcellular location">
    <subcellularLocation>
        <location evidence="1">Cell membrane</location>
        <topology evidence="1">Peripheral membrane protein</topology>
    </subcellularLocation>
    <subcellularLocation>
        <location evidence="1">Synapse</location>
    </subcellularLocation>
    <subcellularLocation>
        <location evidence="1">Presynaptic cell membrane</location>
        <topology evidence="1">Peripheral membrane protein</topology>
    </subcellularLocation>
</comment>
<comment type="alternative products">
    <event type="alternative splicing"/>
    <isoform>
        <id>Q86UR5-1</id>
        <name>1</name>
        <name>RIM1 alpha</name>
        <sequence type="displayed"/>
    </isoform>
    <isoform>
        <id>Q86UR5-2</id>
        <name>2</name>
        <name>RIM short form</name>
        <sequence type="described" ref="VSP_008165"/>
    </isoform>
    <isoform>
        <id>Q86UR5-3</id>
        <name>3</name>
        <name>RIM long form</name>
        <name>Rab3 interacting protein variant 2</name>
        <sequence type="described" ref="VSP_008164 VSP_008167 VSP_008171"/>
    </isoform>
    <isoform>
        <id>Q86UR5-4</id>
        <name>4</name>
        <name>Rab3 interacting protein variant 1</name>
        <sequence type="described" ref="VSP_008166 VSP_008167"/>
    </isoform>
    <isoform>
        <id>Q86UR5-5</id>
        <name>5</name>
        <name>Rab3 interacting protein variant 3</name>
        <sequence type="described" ref="VSP_008161 VSP_008163 VSP_008170"/>
    </isoform>
    <isoform>
        <id>Q86UR5-6</id>
        <name>6</name>
        <name>Rab3 interacting protein variant 4</name>
        <sequence type="described" ref="VSP_008164 VSP_008168 VSP_008169"/>
    </isoform>
    <isoform>
        <id>Q86UR5-7</id>
        <name>7</name>
        <name>Rab3 interacting protein variant 5</name>
        <sequence type="described" ref="VSP_008161 VSP_008164 VSP_008167 VSP_008169"/>
    </isoform>
    <isoform>
        <id>Q86UR5-8</id>
        <name>8</name>
        <name>Rab3 interacting protein variant 6</name>
        <sequence type="described" ref="VSP_008161 VSP_008162 VSP_008169"/>
    </isoform>
    <isoform>
        <id>Q86UR5-9</id>
        <name>9</name>
        <sequence type="described" ref="VSP_043177 VSP_043178 VSP_008164 VSP_043179 VSP_043180 VSP_008169"/>
    </isoform>
    <isoform>
        <id>Q86UR5-10</id>
        <name>10</name>
        <sequence type="described" ref="VSP_045486 VSP_008164 VSP_043179 VSP_043180 VSP_008169"/>
    </isoform>
    <isoform>
        <id>Q86UR5-11</id>
        <name>11</name>
        <sequence type="described" ref="VSP_045485"/>
    </isoform>
    <isoform>
        <id>Q86UR5-12</id>
        <name>12</name>
        <sequence type="described" ref="VSP_046796 VSP_008161 VSP_008164 VSP_043179 VSP_043180"/>
    </isoform>
    <isoform>
        <id>Q86UR5-13</id>
        <name>13</name>
        <sequence type="described" ref="VSP_046796 VSP_008164 VSP_008167 VSP_008169"/>
    </isoform>
    <text>Additional isoforms seem to exist.</text>
</comment>
<comment type="tissue specificity">
    <text evidence="11">Expressed in melanocytes (PubMed:23999003). Detected in brain and retina (PubMed:23999003).</text>
</comment>
<comment type="PTM">
    <text evidence="1">Phosphorylated by BRSK1.</text>
</comment>
<comment type="miscellaneous">
    <molecule>Isoform 2</molecule>
    <text evidence="17">May be due to intron retention.</text>
</comment>
<comment type="sequence caution" evidence="17">
    <conflict type="erroneous initiation">
        <sequence resource="EMBL-CDS" id="BAA20798"/>
    </conflict>
</comment>
<comment type="sequence caution" evidence="17">
    <conflict type="erroneous gene model prediction">
        <sequence resource="EMBL-CDS" id="CAI39600"/>
    </conflict>
</comment>
<comment type="sequence caution" evidence="17">
    <conflict type="erroneous gene model prediction">
        <sequence resource="EMBL-CDS" id="CAI42135"/>
    </conflict>
</comment>
<reference key="1">
    <citation type="journal article" date="2003" name="Genomics">
        <title>Genomic organisation and alternative splicing of human RIM1, a gene implicated in autosomal dominant cone-rod dystrophy (CORD7).</title>
        <authorList>
            <person name="Johnson S."/>
            <person name="Halford S."/>
            <person name="Morris A.G."/>
            <person name="Patel R.J."/>
            <person name="Wilkie S.E."/>
            <person name="Hardcastle A.J."/>
            <person name="Moore A.T."/>
            <person name="Zhang K."/>
            <person name="Hunt D.M."/>
        </authorList>
    </citation>
    <scope>NUCLEOTIDE SEQUENCE [MRNA] (ISOFORM 1)</scope>
    <scope>ALTERNATIVE SPLICING</scope>
    <scope>VARIANT HIS-820</scope>
</reference>
<reference key="2">
    <citation type="submission" date="2000-11" db="EMBL/GenBank/DDBJ databases">
        <title>Identification of the alternative form of human RIM.</title>
        <authorList>
            <person name="Aoyama M."/>
            <person name="Asai K."/>
            <person name="Shishikura T."/>
            <person name="Ohira M."/>
            <person name="Inuzuka H."/>
            <person name="Morohashi A."/>
            <person name="Kato T."/>
            <person name="Nakagawara A."/>
        </authorList>
    </citation>
    <scope>NUCLEOTIDE SEQUENCE [MRNA] (ISOFORMS 2 AND 3)</scope>
    <source>
        <tissue>Neuroblastoma</tissue>
    </source>
</reference>
<reference key="3">
    <citation type="journal article" date="1997" name="DNA Res.">
        <title>Prediction of the coding sequences of unidentified human genes. VII. The complete sequences of 100 new cDNA clones from brain which can code for large proteins in vitro.</title>
        <authorList>
            <person name="Nagase T."/>
            <person name="Ishikawa K."/>
            <person name="Nakajima D."/>
            <person name="Ohira M."/>
            <person name="Seki N."/>
            <person name="Miyajima N."/>
            <person name="Tanaka A."/>
            <person name="Kotani H."/>
            <person name="Nomura N."/>
            <person name="Ohara O."/>
        </authorList>
    </citation>
    <scope>NUCLEOTIDE SEQUENCE [LARGE SCALE MRNA] (ISOFORM 2)</scope>
    <source>
        <tissue>Brain</tissue>
    </source>
</reference>
<reference key="4">
    <citation type="journal article" date="2004" name="Nat. Genet.">
        <title>Complete sequencing and characterization of 21,243 full-length human cDNAs.</title>
        <authorList>
            <person name="Ota T."/>
            <person name="Suzuki Y."/>
            <person name="Nishikawa T."/>
            <person name="Otsuki T."/>
            <person name="Sugiyama T."/>
            <person name="Irie R."/>
            <person name="Wakamatsu A."/>
            <person name="Hayashi K."/>
            <person name="Sato H."/>
            <person name="Nagai K."/>
            <person name="Kimura K."/>
            <person name="Makita H."/>
            <person name="Sekine M."/>
            <person name="Obayashi M."/>
            <person name="Nishi T."/>
            <person name="Shibahara T."/>
            <person name="Tanaka T."/>
            <person name="Ishii S."/>
            <person name="Yamamoto J."/>
            <person name="Saito K."/>
            <person name="Kawai Y."/>
            <person name="Isono Y."/>
            <person name="Nakamura Y."/>
            <person name="Nagahari K."/>
            <person name="Murakami K."/>
            <person name="Yasuda T."/>
            <person name="Iwayanagi T."/>
            <person name="Wagatsuma M."/>
            <person name="Shiratori A."/>
            <person name="Sudo H."/>
            <person name="Hosoiri T."/>
            <person name="Kaku Y."/>
            <person name="Kodaira H."/>
            <person name="Kondo H."/>
            <person name="Sugawara M."/>
            <person name="Takahashi M."/>
            <person name="Kanda K."/>
            <person name="Yokoi T."/>
            <person name="Furuya T."/>
            <person name="Kikkawa E."/>
            <person name="Omura Y."/>
            <person name="Abe K."/>
            <person name="Kamihara K."/>
            <person name="Katsuta N."/>
            <person name="Sato K."/>
            <person name="Tanikawa M."/>
            <person name="Yamazaki M."/>
            <person name="Ninomiya K."/>
            <person name="Ishibashi T."/>
            <person name="Yamashita H."/>
            <person name="Murakawa K."/>
            <person name="Fujimori K."/>
            <person name="Tanai H."/>
            <person name="Kimata M."/>
            <person name="Watanabe M."/>
            <person name="Hiraoka S."/>
            <person name="Chiba Y."/>
            <person name="Ishida S."/>
            <person name="Ono Y."/>
            <person name="Takiguchi S."/>
            <person name="Watanabe S."/>
            <person name="Yosida M."/>
            <person name="Hotuta T."/>
            <person name="Kusano J."/>
            <person name="Kanehori K."/>
            <person name="Takahashi-Fujii A."/>
            <person name="Hara H."/>
            <person name="Tanase T.-O."/>
            <person name="Nomura Y."/>
            <person name="Togiya S."/>
            <person name="Komai F."/>
            <person name="Hara R."/>
            <person name="Takeuchi K."/>
            <person name="Arita M."/>
            <person name="Imose N."/>
            <person name="Musashino K."/>
            <person name="Yuuki H."/>
            <person name="Oshima A."/>
            <person name="Sasaki N."/>
            <person name="Aotsuka S."/>
            <person name="Yoshikawa Y."/>
            <person name="Matsunawa H."/>
            <person name="Ichihara T."/>
            <person name="Shiohata N."/>
            <person name="Sano S."/>
            <person name="Moriya S."/>
            <person name="Momiyama H."/>
            <person name="Satoh N."/>
            <person name="Takami S."/>
            <person name="Terashima Y."/>
            <person name="Suzuki O."/>
            <person name="Nakagawa S."/>
            <person name="Senoh A."/>
            <person name="Mizoguchi H."/>
            <person name="Goto Y."/>
            <person name="Shimizu F."/>
            <person name="Wakebe H."/>
            <person name="Hishigaki H."/>
            <person name="Watanabe T."/>
            <person name="Sugiyama A."/>
            <person name="Takemoto M."/>
            <person name="Kawakami B."/>
            <person name="Yamazaki M."/>
            <person name="Watanabe K."/>
            <person name="Kumagai A."/>
            <person name="Itakura S."/>
            <person name="Fukuzumi Y."/>
            <person name="Fujimori Y."/>
            <person name="Komiyama M."/>
            <person name="Tashiro H."/>
            <person name="Tanigami A."/>
            <person name="Fujiwara T."/>
            <person name="Ono T."/>
            <person name="Yamada K."/>
            <person name="Fujii Y."/>
            <person name="Ozaki K."/>
            <person name="Hirao M."/>
            <person name="Ohmori Y."/>
            <person name="Kawabata A."/>
            <person name="Hikiji T."/>
            <person name="Kobatake N."/>
            <person name="Inagaki H."/>
            <person name="Ikema Y."/>
            <person name="Okamoto S."/>
            <person name="Okitani R."/>
            <person name="Kawakami T."/>
            <person name="Noguchi S."/>
            <person name="Itoh T."/>
            <person name="Shigeta K."/>
            <person name="Senba T."/>
            <person name="Matsumura K."/>
            <person name="Nakajima Y."/>
            <person name="Mizuno T."/>
            <person name="Morinaga M."/>
            <person name="Sasaki M."/>
            <person name="Togashi T."/>
            <person name="Oyama M."/>
            <person name="Hata H."/>
            <person name="Watanabe M."/>
            <person name="Komatsu T."/>
            <person name="Mizushima-Sugano J."/>
            <person name="Satoh T."/>
            <person name="Shirai Y."/>
            <person name="Takahashi Y."/>
            <person name="Nakagawa K."/>
            <person name="Okumura K."/>
            <person name="Nagase T."/>
            <person name="Nomura N."/>
            <person name="Kikuchi H."/>
            <person name="Masuho Y."/>
            <person name="Yamashita R."/>
            <person name="Nakai K."/>
            <person name="Yada T."/>
            <person name="Nakamura Y."/>
            <person name="Ohara O."/>
            <person name="Isogai T."/>
            <person name="Sugano S."/>
        </authorList>
    </citation>
    <scope>NUCLEOTIDE SEQUENCE [LARGE SCALE MRNA] (ISOFORMS 9; 10; 11; 12 AND 13)</scope>
    <source>
        <tissue>Brain</tissue>
        <tissue>Small intestine</tissue>
        <tissue>Thalamus</tissue>
    </source>
</reference>
<reference key="5">
    <citation type="journal article" date="2003" name="Nature">
        <title>The DNA sequence and analysis of human chromosome 6.</title>
        <authorList>
            <person name="Mungall A.J."/>
            <person name="Palmer S.A."/>
            <person name="Sims S.K."/>
            <person name="Edwards C.A."/>
            <person name="Ashurst J.L."/>
            <person name="Wilming L."/>
            <person name="Jones M.C."/>
            <person name="Horton R."/>
            <person name="Hunt S.E."/>
            <person name="Scott C.E."/>
            <person name="Gilbert J.G.R."/>
            <person name="Clamp M.E."/>
            <person name="Bethel G."/>
            <person name="Milne S."/>
            <person name="Ainscough R."/>
            <person name="Almeida J.P."/>
            <person name="Ambrose K.D."/>
            <person name="Andrews T.D."/>
            <person name="Ashwell R.I.S."/>
            <person name="Babbage A.K."/>
            <person name="Bagguley C.L."/>
            <person name="Bailey J."/>
            <person name="Banerjee R."/>
            <person name="Barker D.J."/>
            <person name="Barlow K.F."/>
            <person name="Bates K."/>
            <person name="Beare D.M."/>
            <person name="Beasley H."/>
            <person name="Beasley O."/>
            <person name="Bird C.P."/>
            <person name="Blakey S.E."/>
            <person name="Bray-Allen S."/>
            <person name="Brook J."/>
            <person name="Brown A.J."/>
            <person name="Brown J.Y."/>
            <person name="Burford D.C."/>
            <person name="Burrill W."/>
            <person name="Burton J."/>
            <person name="Carder C."/>
            <person name="Carter N.P."/>
            <person name="Chapman J.C."/>
            <person name="Clark S.Y."/>
            <person name="Clark G."/>
            <person name="Clee C.M."/>
            <person name="Clegg S."/>
            <person name="Cobley V."/>
            <person name="Collier R.E."/>
            <person name="Collins J.E."/>
            <person name="Colman L.K."/>
            <person name="Corby N.R."/>
            <person name="Coville G.J."/>
            <person name="Culley K.M."/>
            <person name="Dhami P."/>
            <person name="Davies J."/>
            <person name="Dunn M."/>
            <person name="Earthrowl M.E."/>
            <person name="Ellington A.E."/>
            <person name="Evans K.A."/>
            <person name="Faulkner L."/>
            <person name="Francis M.D."/>
            <person name="Frankish A."/>
            <person name="Frankland J."/>
            <person name="French L."/>
            <person name="Garner P."/>
            <person name="Garnett J."/>
            <person name="Ghori M.J."/>
            <person name="Gilby L.M."/>
            <person name="Gillson C.J."/>
            <person name="Glithero R.J."/>
            <person name="Grafham D.V."/>
            <person name="Grant M."/>
            <person name="Gribble S."/>
            <person name="Griffiths C."/>
            <person name="Griffiths M.N.D."/>
            <person name="Hall R."/>
            <person name="Halls K.S."/>
            <person name="Hammond S."/>
            <person name="Harley J.L."/>
            <person name="Hart E.A."/>
            <person name="Heath P.D."/>
            <person name="Heathcott R."/>
            <person name="Holmes S.J."/>
            <person name="Howden P.J."/>
            <person name="Howe K.L."/>
            <person name="Howell G.R."/>
            <person name="Huckle E."/>
            <person name="Humphray S.J."/>
            <person name="Humphries M.D."/>
            <person name="Hunt A.R."/>
            <person name="Johnson C.M."/>
            <person name="Joy A.A."/>
            <person name="Kay M."/>
            <person name="Keenan S.J."/>
            <person name="Kimberley A.M."/>
            <person name="King A."/>
            <person name="Laird G.K."/>
            <person name="Langford C."/>
            <person name="Lawlor S."/>
            <person name="Leongamornlert D.A."/>
            <person name="Leversha M."/>
            <person name="Lloyd C.R."/>
            <person name="Lloyd D.M."/>
            <person name="Loveland J.E."/>
            <person name="Lovell J."/>
            <person name="Martin S."/>
            <person name="Mashreghi-Mohammadi M."/>
            <person name="Maslen G.L."/>
            <person name="Matthews L."/>
            <person name="McCann O.T."/>
            <person name="McLaren S.J."/>
            <person name="McLay K."/>
            <person name="McMurray A."/>
            <person name="Moore M.J.F."/>
            <person name="Mullikin J.C."/>
            <person name="Niblett D."/>
            <person name="Nickerson T."/>
            <person name="Novik K.L."/>
            <person name="Oliver K."/>
            <person name="Overton-Larty E.K."/>
            <person name="Parker A."/>
            <person name="Patel R."/>
            <person name="Pearce A.V."/>
            <person name="Peck A.I."/>
            <person name="Phillimore B.J.C.T."/>
            <person name="Phillips S."/>
            <person name="Plumb R.W."/>
            <person name="Porter K.M."/>
            <person name="Ramsey Y."/>
            <person name="Ranby S.A."/>
            <person name="Rice C.M."/>
            <person name="Ross M.T."/>
            <person name="Searle S.M."/>
            <person name="Sehra H.K."/>
            <person name="Sheridan E."/>
            <person name="Skuce C.D."/>
            <person name="Smith S."/>
            <person name="Smith M."/>
            <person name="Spraggon L."/>
            <person name="Squares S.L."/>
            <person name="Steward C.A."/>
            <person name="Sycamore N."/>
            <person name="Tamlyn-Hall G."/>
            <person name="Tester J."/>
            <person name="Theaker A.J."/>
            <person name="Thomas D.W."/>
            <person name="Thorpe A."/>
            <person name="Tracey A."/>
            <person name="Tromans A."/>
            <person name="Tubby B."/>
            <person name="Wall M."/>
            <person name="Wallis J.M."/>
            <person name="West A.P."/>
            <person name="White S.S."/>
            <person name="Whitehead S.L."/>
            <person name="Whittaker H."/>
            <person name="Wild A."/>
            <person name="Willey D.J."/>
            <person name="Wilmer T.E."/>
            <person name="Wood J.M."/>
            <person name="Wray P.W."/>
            <person name="Wyatt J.C."/>
            <person name="Young L."/>
            <person name="Younger R.M."/>
            <person name="Bentley D.R."/>
            <person name="Coulson A."/>
            <person name="Durbin R.M."/>
            <person name="Hubbard T."/>
            <person name="Sulston J.E."/>
            <person name="Dunham I."/>
            <person name="Rogers J."/>
            <person name="Beck S."/>
        </authorList>
    </citation>
    <scope>NUCLEOTIDE SEQUENCE [LARGE SCALE GENOMIC DNA]</scope>
</reference>
<reference key="6">
    <citation type="journal article" date="2004" name="Genome Res.">
        <title>The status, quality, and expansion of the NIH full-length cDNA project: the Mammalian Gene Collection (MGC).</title>
        <authorList>
            <consortium name="The MGC Project Team"/>
        </authorList>
    </citation>
    <scope>NUCLEOTIDE SEQUENCE [LARGE SCALE MRNA] (ISOFORM 2)</scope>
</reference>
<reference key="7">
    <citation type="journal article" date="2001" name="J. Biol. Chem.">
        <title>Direct interaction of the Rab3 effector RIM with Ca2+ channels, SNAP-25, and synaptotagmin.</title>
        <authorList>
            <person name="Coppola T."/>
            <person name="Magnin-Luethi S."/>
            <person name="Perret-Menoud V."/>
            <person name="Gattesco S."/>
            <person name="Schiavo G."/>
            <person name="Regazzi R."/>
        </authorList>
    </citation>
    <scope>NUCLEOTIDE SEQUENCE [MRNA] OF 776-1692 (ISOFORMS 3; 4; 5; 6; 7 AND 8)</scope>
    <scope>MUTAGENESIS OF 796-LYS-LYS-797 AND 1591-ARG-ARG-1592</scope>
    <scope>INTERACTION WITH SNAP25; SYT1 AND CACNA1B</scope>
    <source>
        <tissue>Brain</tissue>
    </source>
</reference>
<reference key="8">
    <citation type="journal article" date="2008" name="J. Proteome Res.">
        <title>Combining protein-based IMAC, peptide-based IMAC, and MudPIT for efficient phosphoproteomic analysis.</title>
        <authorList>
            <person name="Cantin G.T."/>
            <person name="Yi W."/>
            <person name="Lu B."/>
            <person name="Park S.K."/>
            <person name="Xu T."/>
            <person name="Lee J.-D."/>
            <person name="Yates J.R. III"/>
        </authorList>
    </citation>
    <scope>IDENTIFICATION BY MASS SPECTROMETRY [LARGE SCALE ANALYSIS]</scope>
    <source>
        <tissue>Cervix carcinoma</tissue>
    </source>
</reference>
<reference key="9">
    <citation type="journal article" date="2008" name="Proc. Natl. Acad. Sci. U.S.A.">
        <title>A quantitative atlas of mitotic phosphorylation.</title>
        <authorList>
            <person name="Dephoure N."/>
            <person name="Zhou C."/>
            <person name="Villen J."/>
            <person name="Beausoleil S.A."/>
            <person name="Bakalarski C.E."/>
            <person name="Elledge S.J."/>
            <person name="Gygi S.P."/>
        </authorList>
    </citation>
    <scope>PHOSPHORYLATION [LARGE SCALE ANALYSIS] AT SER-1677; SER-1680; SER-1683 AND SER-1692</scope>
    <scope>IDENTIFICATION BY MASS SPECTROMETRY [LARGE SCALE ANALYSIS]</scope>
    <source>
        <tissue>Cervix carcinoma</tissue>
    </source>
</reference>
<reference key="10">
    <citation type="journal article" date="2013" name="J. Dermatol. Sci.">
        <title>SYT14L, especially its C2 domain, is involved in regulating melanocyte differentiation.</title>
        <authorList>
            <person name="Yoo J.C."/>
            <person name="Lim T.Y."/>
            <person name="Park J.S."/>
            <person name="Hah Y.S."/>
            <person name="Park N."/>
            <person name="Hong S.G."/>
            <person name="Park J.Y."/>
            <person name="Yoon T.J."/>
        </authorList>
    </citation>
    <scope>FUNCTION</scope>
    <scope>TISSUE SPECIFICITY</scope>
</reference>
<reference key="11">
    <citation type="submission" date="2005-11" db="PDB data bank">
        <title>Solution structure of the PDZ domain of human KIAA0340 protein.</title>
        <authorList>
            <consortium name="RIKEN structural genomics initiative (RSGI)"/>
        </authorList>
    </citation>
    <scope>STRUCTURE BY NMR OF 585-694</scope>
</reference>
<organism>
    <name type="scientific">Homo sapiens</name>
    <name type="common">Human</name>
    <dbReference type="NCBI Taxonomy" id="9606"/>
    <lineage>
        <taxon>Eukaryota</taxon>
        <taxon>Metazoa</taxon>
        <taxon>Chordata</taxon>
        <taxon>Craniata</taxon>
        <taxon>Vertebrata</taxon>
        <taxon>Euteleostomi</taxon>
        <taxon>Mammalia</taxon>
        <taxon>Eutheria</taxon>
        <taxon>Euarchontoglires</taxon>
        <taxon>Primates</taxon>
        <taxon>Haplorrhini</taxon>
        <taxon>Catarrhini</taxon>
        <taxon>Hominidae</taxon>
        <taxon>Homo</taxon>
    </lineage>
</organism>
<name>RIMS1_HUMAN</name>
<accession>Q86UR5</accession>
<accession>A7MBN6</accession>
<accession>B7Z2M0</accession>
<accession>B7Z2Q9</accession>
<accession>B7Z3S3</accession>
<accession>B7Z6S2</accession>
<accession>E7EX08</accession>
<accession>E9PCB7</accession>
<accession>E9PCZ1</accession>
<accession>E9PF48</accession>
<accession>E9PHF5</accession>
<accession>E9PHR1</accession>
<accession>O15048</accession>
<accession>Q5JY21</accession>
<accession>Q5JY25</accession>
<accession>Q5SZK1</accession>
<accession>Q8TDY9</accession>
<accession>Q8TDZ5</accession>
<accession>Q9HBA1</accession>
<accession>Q9HBA2</accession>
<accession>Q9HBA3</accession>
<accession>Q9HBA4</accession>
<accession>Q9HBA5</accession>
<accession>Q9HBA6</accession>
<protein>
    <recommendedName>
        <fullName>Regulating synaptic membrane exocytosis protein 1</fullName>
    </recommendedName>
    <alternativeName>
        <fullName>Rab-3-interacting molecule 1</fullName>
        <shortName>RIM 1</shortName>
    </alternativeName>
    <alternativeName>
        <fullName>Rab-3-interacting protein 2</fullName>
    </alternativeName>
</protein>